<feature type="initiator methionine" description="Removed" evidence="8">
    <location>
        <position position="1"/>
    </location>
</feature>
<feature type="chain" id="PRO_0000053347" description="Myoglobin">
    <location>
        <begin position="2"/>
        <end position="154"/>
    </location>
</feature>
<feature type="domain" description="Globin" evidence="7">
    <location>
        <begin position="2"/>
        <end position="148"/>
    </location>
</feature>
<feature type="binding site" evidence="5">
    <location>
        <position position="65"/>
    </location>
    <ligand>
        <name>nitrite</name>
        <dbReference type="ChEBI" id="CHEBI:16301"/>
    </ligand>
</feature>
<feature type="binding site" evidence="3 7">
    <location>
        <position position="65"/>
    </location>
    <ligand>
        <name>O2</name>
        <dbReference type="ChEBI" id="CHEBI:15379"/>
    </ligand>
</feature>
<feature type="binding site" description="proximal binding residue" evidence="1">
    <location>
        <position position="94"/>
    </location>
    <ligand>
        <name>heme b</name>
        <dbReference type="ChEBI" id="CHEBI:60344"/>
    </ligand>
    <ligandPart>
        <name>Fe</name>
        <dbReference type="ChEBI" id="CHEBI:18248"/>
    </ligandPart>
</feature>
<feature type="modified residue" description="Phosphoserine" evidence="6">
    <location>
        <position position="4"/>
    </location>
</feature>
<feature type="modified residue" description="Phosphothreonine" evidence="4">
    <location>
        <position position="68"/>
    </location>
</feature>
<organism>
    <name type="scientific">Tupaia glis</name>
    <name type="common">Common tree shrew</name>
    <name type="synonym">Sorex glis</name>
    <dbReference type="NCBI Taxonomy" id="9395"/>
    <lineage>
        <taxon>Eukaryota</taxon>
        <taxon>Metazoa</taxon>
        <taxon>Chordata</taxon>
        <taxon>Craniata</taxon>
        <taxon>Vertebrata</taxon>
        <taxon>Euteleostomi</taxon>
        <taxon>Mammalia</taxon>
        <taxon>Eutheria</taxon>
        <taxon>Euarchontoglires</taxon>
        <taxon>Scandentia</taxon>
        <taxon>Tupaiidae</taxon>
        <taxon>Tupaia</taxon>
    </lineage>
</organism>
<protein>
    <recommendedName>
        <fullName>Myoglobin</fullName>
    </recommendedName>
    <alternativeName>
        <fullName evidence="1">Nitrite reductase MB</fullName>
        <ecNumber evidence="1">1.7.-.-</ecNumber>
    </alternativeName>
    <alternativeName>
        <fullName evidence="1">Pseudoperoxidase MB</fullName>
        <ecNumber evidence="1">1.11.1.-</ecNumber>
    </alternativeName>
</protein>
<evidence type="ECO:0000250" key="1">
    <source>
        <dbReference type="UniProtKB" id="P02144"/>
    </source>
</evidence>
<evidence type="ECO:0000250" key="2">
    <source>
        <dbReference type="UniProtKB" id="P02185"/>
    </source>
</evidence>
<evidence type="ECO:0000250" key="3">
    <source>
        <dbReference type="UniProtKB" id="P02189"/>
    </source>
</evidence>
<evidence type="ECO:0000250" key="4">
    <source>
        <dbReference type="UniProtKB" id="P04247"/>
    </source>
</evidence>
<evidence type="ECO:0000250" key="5">
    <source>
        <dbReference type="UniProtKB" id="P68082"/>
    </source>
</evidence>
<evidence type="ECO:0000250" key="6">
    <source>
        <dbReference type="UniProtKB" id="Q9QZ76"/>
    </source>
</evidence>
<evidence type="ECO:0000255" key="7">
    <source>
        <dbReference type="PROSITE-ProRule" id="PRU00238"/>
    </source>
</evidence>
<evidence type="ECO:0000269" key="8">
    <source>
    </source>
</evidence>
<name>MYG_TUPGL</name>
<proteinExistence type="evidence at protein level"/>
<comment type="function">
    <text evidence="1">Monomeric heme protein which primary function is to store oxygen and facilitate its diffusion within muscle tissues. Reversibly binds oxygen through a pentacoordinated heme iron and enables its timely and efficient release as needed during periods of heightened demand. Depending on the oxidative conditions of tissues and cells, and in addition to its ability to bind oxygen, it also has a nitrite reductase activity whereby it regulates the production of bioactive nitric oxide. Under stress conditions, like hypoxia and anoxia, it also protects cells against reactive oxygen species thanks to its pseudoperoxidase activity.</text>
</comment>
<comment type="catalytic activity">
    <reaction evidence="1">
        <text>Fe(III)-heme b-[protein] + nitric oxide + H2O = Fe(II)-heme b-[protein] + nitrite + 2 H(+)</text>
        <dbReference type="Rhea" id="RHEA:77711"/>
        <dbReference type="Rhea" id="RHEA-COMP:18975"/>
        <dbReference type="Rhea" id="RHEA-COMP:18976"/>
        <dbReference type="ChEBI" id="CHEBI:15377"/>
        <dbReference type="ChEBI" id="CHEBI:15378"/>
        <dbReference type="ChEBI" id="CHEBI:16301"/>
        <dbReference type="ChEBI" id="CHEBI:16480"/>
        <dbReference type="ChEBI" id="CHEBI:55376"/>
        <dbReference type="ChEBI" id="CHEBI:60344"/>
    </reaction>
    <physiologicalReaction direction="right-to-left" evidence="1">
        <dbReference type="Rhea" id="RHEA:77713"/>
    </physiologicalReaction>
</comment>
<comment type="catalytic activity">
    <reaction evidence="1">
        <text>H2O2 + AH2 = A + 2 H2O</text>
        <dbReference type="Rhea" id="RHEA:30275"/>
        <dbReference type="ChEBI" id="CHEBI:13193"/>
        <dbReference type="ChEBI" id="CHEBI:15377"/>
        <dbReference type="ChEBI" id="CHEBI:16240"/>
        <dbReference type="ChEBI" id="CHEBI:17499"/>
    </reaction>
</comment>
<comment type="subunit">
    <text evidence="2">Monomeric.</text>
</comment>
<comment type="subcellular location">
    <subcellularLocation>
        <location evidence="1">Cytoplasm</location>
        <location evidence="1">Sarcoplasm</location>
    </subcellularLocation>
</comment>
<comment type="similarity">
    <text evidence="7">Belongs to the globin family.</text>
</comment>
<reference key="1">
    <citation type="journal article" date="1974" name="Biochim. Biophys. Acta">
        <title>The myoglobin of primates. VI. Tupaia glis belangeri (common treeshrew).</title>
        <authorList>
            <person name="Romero-Herrera A.E."/>
            <person name="Lehmann H."/>
        </authorList>
    </citation>
    <scope>PROTEIN SEQUENCE OF 2-154</scope>
</reference>
<accession>P02165</accession>
<gene>
    <name type="primary">MB</name>
</gene>
<dbReference type="EC" id="1.7.-.-" evidence="1"/>
<dbReference type="EC" id="1.11.1.-" evidence="1"/>
<dbReference type="PIR" id="A02483">
    <property type="entry name" value="MYTS"/>
</dbReference>
<dbReference type="SMR" id="P02165"/>
<dbReference type="GO" id="GO:0070062">
    <property type="term" value="C:extracellular exosome"/>
    <property type="evidence" value="ECO:0007669"/>
    <property type="project" value="TreeGrafter"/>
</dbReference>
<dbReference type="GO" id="GO:0016528">
    <property type="term" value="C:sarcoplasm"/>
    <property type="evidence" value="ECO:0000250"/>
    <property type="project" value="UniProtKB"/>
</dbReference>
<dbReference type="GO" id="GO:0020037">
    <property type="term" value="F:heme binding"/>
    <property type="evidence" value="ECO:0007669"/>
    <property type="project" value="InterPro"/>
</dbReference>
<dbReference type="GO" id="GO:0046872">
    <property type="term" value="F:metal ion binding"/>
    <property type="evidence" value="ECO:0007669"/>
    <property type="project" value="UniProtKB-KW"/>
</dbReference>
<dbReference type="GO" id="GO:0098809">
    <property type="term" value="F:nitrite reductase activity"/>
    <property type="evidence" value="ECO:0000250"/>
    <property type="project" value="UniProtKB"/>
</dbReference>
<dbReference type="GO" id="GO:0019825">
    <property type="term" value="F:oxygen binding"/>
    <property type="evidence" value="ECO:0007669"/>
    <property type="project" value="InterPro"/>
</dbReference>
<dbReference type="GO" id="GO:0005344">
    <property type="term" value="F:oxygen carrier activity"/>
    <property type="evidence" value="ECO:0000250"/>
    <property type="project" value="UniProtKB"/>
</dbReference>
<dbReference type="GO" id="GO:0004601">
    <property type="term" value="F:peroxidase activity"/>
    <property type="evidence" value="ECO:0000250"/>
    <property type="project" value="UniProtKB"/>
</dbReference>
<dbReference type="GO" id="GO:0019430">
    <property type="term" value="P:removal of superoxide radicals"/>
    <property type="evidence" value="ECO:0000250"/>
    <property type="project" value="UniProtKB"/>
</dbReference>
<dbReference type="CDD" id="cd08926">
    <property type="entry name" value="Mb"/>
    <property type="match status" value="1"/>
</dbReference>
<dbReference type="Gene3D" id="6.10.140.2100">
    <property type="match status" value="1"/>
</dbReference>
<dbReference type="Gene3D" id="6.10.140.2110">
    <property type="match status" value="1"/>
</dbReference>
<dbReference type="InterPro" id="IPR000971">
    <property type="entry name" value="Globin"/>
</dbReference>
<dbReference type="InterPro" id="IPR009050">
    <property type="entry name" value="Globin-like_sf"/>
</dbReference>
<dbReference type="InterPro" id="IPR002335">
    <property type="entry name" value="Myoglobin"/>
</dbReference>
<dbReference type="PANTHER" id="PTHR47132">
    <property type="entry name" value="MYOGLOBIN"/>
    <property type="match status" value="1"/>
</dbReference>
<dbReference type="PANTHER" id="PTHR47132:SF1">
    <property type="entry name" value="MYOGLOBIN"/>
    <property type="match status" value="1"/>
</dbReference>
<dbReference type="Pfam" id="PF00042">
    <property type="entry name" value="Globin"/>
    <property type="match status" value="1"/>
</dbReference>
<dbReference type="PRINTS" id="PR00613">
    <property type="entry name" value="MYOGLOBIN"/>
</dbReference>
<dbReference type="SUPFAM" id="SSF46458">
    <property type="entry name" value="Globin-like"/>
    <property type="match status" value="1"/>
</dbReference>
<dbReference type="PROSITE" id="PS01033">
    <property type="entry name" value="GLOBIN"/>
    <property type="match status" value="1"/>
</dbReference>
<sequence length="154" mass="17099">MGLSDGEWQLVLNVWGKVEADVAGHGQEVLIRLFKGHPETLEKFDKFKHLKTEDEMKASEDLKKHGNTVLSALGGILKKKGQHEAEIKPLAQSHATKHKIPVKYLEFISEAIIQVLQSKHPGDFGADAQAAMSKALELFRNDIAAKYKELGFQG</sequence>
<keyword id="KW-0963">Cytoplasm</keyword>
<keyword id="KW-0903">Direct protein sequencing</keyword>
<keyword id="KW-0349">Heme</keyword>
<keyword id="KW-0408">Iron</keyword>
<keyword id="KW-0479">Metal-binding</keyword>
<keyword id="KW-0514">Muscle protein</keyword>
<keyword id="KW-0560">Oxidoreductase</keyword>
<keyword id="KW-0561">Oxygen transport</keyword>
<keyword id="KW-0597">Phosphoprotein</keyword>
<keyword id="KW-0813">Transport</keyword>